<organism>
    <name type="scientific">Geotalea uraniireducens (strain Rf4)</name>
    <name type="common">Geobacter uraniireducens</name>
    <dbReference type="NCBI Taxonomy" id="351605"/>
    <lineage>
        <taxon>Bacteria</taxon>
        <taxon>Pseudomonadati</taxon>
        <taxon>Thermodesulfobacteriota</taxon>
        <taxon>Desulfuromonadia</taxon>
        <taxon>Geobacterales</taxon>
        <taxon>Geobacteraceae</taxon>
        <taxon>Geotalea</taxon>
    </lineage>
</organism>
<accession>A5GAY4</accession>
<dbReference type="EMBL" id="CP000698">
    <property type="protein sequence ID" value="ABQ25270.1"/>
    <property type="molecule type" value="Genomic_DNA"/>
</dbReference>
<dbReference type="RefSeq" id="WP_011937994.1">
    <property type="nucleotide sequence ID" value="NC_009483.1"/>
</dbReference>
<dbReference type="SMR" id="A5GAY4"/>
<dbReference type="STRING" id="351605.Gura_1064"/>
<dbReference type="KEGG" id="gur:Gura_1064"/>
<dbReference type="HOGENOM" id="CLU_072226_1_1_7"/>
<dbReference type="OrthoDB" id="9807653at2"/>
<dbReference type="Proteomes" id="UP000006695">
    <property type="component" value="Chromosome"/>
</dbReference>
<dbReference type="GO" id="GO:0015935">
    <property type="term" value="C:small ribosomal subunit"/>
    <property type="evidence" value="ECO:0007669"/>
    <property type="project" value="InterPro"/>
</dbReference>
<dbReference type="GO" id="GO:0019843">
    <property type="term" value="F:rRNA binding"/>
    <property type="evidence" value="ECO:0007669"/>
    <property type="project" value="UniProtKB-UniRule"/>
</dbReference>
<dbReference type="GO" id="GO:0003735">
    <property type="term" value="F:structural constituent of ribosome"/>
    <property type="evidence" value="ECO:0007669"/>
    <property type="project" value="InterPro"/>
</dbReference>
<dbReference type="GO" id="GO:0000049">
    <property type="term" value="F:tRNA binding"/>
    <property type="evidence" value="ECO:0007669"/>
    <property type="project" value="UniProtKB-UniRule"/>
</dbReference>
<dbReference type="GO" id="GO:0006412">
    <property type="term" value="P:translation"/>
    <property type="evidence" value="ECO:0007669"/>
    <property type="project" value="UniProtKB-UniRule"/>
</dbReference>
<dbReference type="CDD" id="cd14869">
    <property type="entry name" value="uS7_Bacteria"/>
    <property type="match status" value="1"/>
</dbReference>
<dbReference type="FunFam" id="1.10.455.10:FF:000001">
    <property type="entry name" value="30S ribosomal protein S7"/>
    <property type="match status" value="1"/>
</dbReference>
<dbReference type="Gene3D" id="1.10.455.10">
    <property type="entry name" value="Ribosomal protein S7 domain"/>
    <property type="match status" value="1"/>
</dbReference>
<dbReference type="HAMAP" id="MF_00480_B">
    <property type="entry name" value="Ribosomal_uS7_B"/>
    <property type="match status" value="1"/>
</dbReference>
<dbReference type="InterPro" id="IPR000235">
    <property type="entry name" value="Ribosomal_uS7"/>
</dbReference>
<dbReference type="InterPro" id="IPR005717">
    <property type="entry name" value="Ribosomal_uS7_bac/org-type"/>
</dbReference>
<dbReference type="InterPro" id="IPR023798">
    <property type="entry name" value="Ribosomal_uS7_dom"/>
</dbReference>
<dbReference type="InterPro" id="IPR036823">
    <property type="entry name" value="Ribosomal_uS7_dom_sf"/>
</dbReference>
<dbReference type="NCBIfam" id="TIGR01029">
    <property type="entry name" value="rpsG_bact"/>
    <property type="match status" value="1"/>
</dbReference>
<dbReference type="PANTHER" id="PTHR11205">
    <property type="entry name" value="RIBOSOMAL PROTEIN S7"/>
    <property type="match status" value="1"/>
</dbReference>
<dbReference type="Pfam" id="PF00177">
    <property type="entry name" value="Ribosomal_S7"/>
    <property type="match status" value="1"/>
</dbReference>
<dbReference type="PIRSF" id="PIRSF002122">
    <property type="entry name" value="RPS7p_RPS7a_RPS5e_RPS7o"/>
    <property type="match status" value="1"/>
</dbReference>
<dbReference type="SUPFAM" id="SSF47973">
    <property type="entry name" value="Ribosomal protein S7"/>
    <property type="match status" value="1"/>
</dbReference>
<sequence>MPRRREVAKRVILPDPKYGDRVVAKLVNIIMLDGKKSTAEKALYGALELASEKVNEDPVKILKKSLDNIKPMLEVKSRRVGGSTYQVPVEVRAERRVSLAMRWLVKYANDRSEKTVTDKLAGEILDAYNNRGAAVKKREDTHKMAEANRAFAHYRW</sequence>
<reference key="1">
    <citation type="submission" date="2007-05" db="EMBL/GenBank/DDBJ databases">
        <title>Complete sequence of Geobacter uraniireducens Rf4.</title>
        <authorList>
            <consortium name="US DOE Joint Genome Institute"/>
            <person name="Copeland A."/>
            <person name="Lucas S."/>
            <person name="Lapidus A."/>
            <person name="Barry K."/>
            <person name="Detter J.C."/>
            <person name="Glavina del Rio T."/>
            <person name="Hammon N."/>
            <person name="Israni S."/>
            <person name="Dalin E."/>
            <person name="Tice H."/>
            <person name="Pitluck S."/>
            <person name="Chertkov O."/>
            <person name="Brettin T."/>
            <person name="Bruce D."/>
            <person name="Han C."/>
            <person name="Schmutz J."/>
            <person name="Larimer F."/>
            <person name="Land M."/>
            <person name="Hauser L."/>
            <person name="Kyrpides N."/>
            <person name="Mikhailova N."/>
            <person name="Shelobolina E."/>
            <person name="Aklujkar M."/>
            <person name="Lovley D."/>
            <person name="Richardson P."/>
        </authorList>
    </citation>
    <scope>NUCLEOTIDE SEQUENCE [LARGE SCALE GENOMIC DNA]</scope>
    <source>
        <strain>ATCC BAA-1134 / JCM 13001 / Rf4</strain>
    </source>
</reference>
<gene>
    <name evidence="1" type="primary">rpsG</name>
    <name type="ordered locus">Gura_1064</name>
</gene>
<comment type="function">
    <text evidence="1">One of the primary rRNA binding proteins, it binds directly to 16S rRNA where it nucleates assembly of the head domain of the 30S subunit. Is located at the subunit interface close to the decoding center, probably blocks exit of the E-site tRNA.</text>
</comment>
<comment type="subunit">
    <text evidence="1">Part of the 30S ribosomal subunit. Contacts proteins S9 and S11.</text>
</comment>
<comment type="similarity">
    <text evidence="1">Belongs to the universal ribosomal protein uS7 family.</text>
</comment>
<keyword id="KW-1185">Reference proteome</keyword>
<keyword id="KW-0687">Ribonucleoprotein</keyword>
<keyword id="KW-0689">Ribosomal protein</keyword>
<keyword id="KW-0694">RNA-binding</keyword>
<keyword id="KW-0699">rRNA-binding</keyword>
<keyword id="KW-0820">tRNA-binding</keyword>
<feature type="chain" id="PRO_1000081283" description="Small ribosomal subunit protein uS7">
    <location>
        <begin position="1"/>
        <end position="156"/>
    </location>
</feature>
<name>RS7_GEOUR</name>
<proteinExistence type="inferred from homology"/>
<evidence type="ECO:0000255" key="1">
    <source>
        <dbReference type="HAMAP-Rule" id="MF_00480"/>
    </source>
</evidence>
<evidence type="ECO:0000305" key="2"/>
<protein>
    <recommendedName>
        <fullName evidence="1">Small ribosomal subunit protein uS7</fullName>
    </recommendedName>
    <alternativeName>
        <fullName evidence="2">30S ribosomal protein S7</fullName>
    </alternativeName>
</protein>